<organismHost>
    <name type="scientific">Homo sapiens</name>
    <name type="common">Human</name>
    <dbReference type="NCBI Taxonomy" id="9606"/>
</organismHost>
<organismHost>
    <name type="scientific">Sus scrofa</name>
    <name type="common">Pig</name>
    <dbReference type="NCBI Taxonomy" id="9823"/>
</organismHost>
<comment type="function">
    <text evidence="1">Binds to the N-acetyl-9-O-acetylneuraminic acid residues on the cell surface, bringing about the attachment of the virus particle to the cell. Plays a major role in the determination of host range restriction and virulence. Class I viral fusion protein. Responsible for penetration of the virus into the cell cytoplasm by mediating the fusion of the membrane of the endocytosed virus particle with the endosomal membrane. Low pH in endosomes induce an irreversible conformational change in HEF2, releasing the fusion hydrophobic peptide. Several trimers are required to form a competent fusion pore. Displays a receptor-destroying activity which is a neuraminidate-O-acetyl esterase. This activity cleaves off any receptor on the cell surface, which would otherwise prevent virions release. These cleavages prevent self-aggregation and ensure the efficient spread of the progeny virus from cell to cell (By similarity).</text>
</comment>
<comment type="catalytic activity">
    <reaction>
        <text>N-acetyl-9-O-acetylneuraminate + H2O = N-acetylneuraminate + acetate + H(+)</text>
        <dbReference type="Rhea" id="RHEA:22600"/>
        <dbReference type="ChEBI" id="CHEBI:15377"/>
        <dbReference type="ChEBI" id="CHEBI:15378"/>
        <dbReference type="ChEBI" id="CHEBI:28999"/>
        <dbReference type="ChEBI" id="CHEBI:30089"/>
        <dbReference type="ChEBI" id="CHEBI:35418"/>
        <dbReference type="EC" id="3.1.1.53"/>
    </reaction>
</comment>
<comment type="catalytic activity">
    <reaction>
        <text>N-acetyl-4-O-acetylneuraminate + H2O = N-acetylneuraminate + acetate + H(+)</text>
        <dbReference type="Rhea" id="RHEA:25564"/>
        <dbReference type="ChEBI" id="CHEBI:15377"/>
        <dbReference type="ChEBI" id="CHEBI:15378"/>
        <dbReference type="ChEBI" id="CHEBI:29006"/>
        <dbReference type="ChEBI" id="CHEBI:30089"/>
        <dbReference type="ChEBI" id="CHEBI:35418"/>
        <dbReference type="EC" id="3.1.1.53"/>
    </reaction>
</comment>
<comment type="subunit">
    <text evidence="1">Homotrimer of disulfide-linked HEF1-HEF2.</text>
</comment>
<comment type="subcellular location">
    <subcellularLocation>
        <location evidence="3">Virion membrane</location>
        <topology evidence="3">Single-pass type I membrane protein</topology>
    </subcellularLocation>
    <subcellularLocation>
        <location evidence="1">Host cell membrane</location>
        <topology evidence="1">Single-pass type I membrane protein</topology>
    </subcellularLocation>
</comment>
<comment type="PTM">
    <text evidence="1">In natural infection, inactive HEF is matured into HEF1 and HEF2 outside the cell by one or more trypsin-like, arginine-specific endoprotease.</text>
</comment>
<comment type="similarity">
    <text evidence="3">Belongs to the influenza type C/coronaviruses hemagglutinin-esterase family.</text>
</comment>
<name>HEMA_INCMI</name>
<reference key="1">
    <citation type="journal article" date="1985" name="Virology">
        <title>Noncumulative sequence changes in the hemagglutinin genes of influenza C virus isolates.</title>
        <authorList>
            <person name="Buonagurio D.A."/>
            <person name="Nakada S."/>
            <person name="Desselberger U."/>
            <person name="Krystal M."/>
            <person name="Palese P."/>
        </authorList>
    </citation>
    <scope>NUCLEOTIDE SEQUENCE [GENOMIC RNA]</scope>
</reference>
<keyword id="KW-1015">Disulfide bond</keyword>
<keyword id="KW-1170">Fusion of virus membrane with host endosomal membrane</keyword>
<keyword id="KW-1168">Fusion of virus membrane with host membrane</keyword>
<keyword id="KW-0325">Glycoprotein</keyword>
<keyword id="KW-0348">Hemagglutinin</keyword>
<keyword id="KW-1032">Host cell membrane</keyword>
<keyword id="KW-1043">Host membrane</keyword>
<keyword id="KW-0945">Host-virus interaction</keyword>
<keyword id="KW-0378">Hydrolase</keyword>
<keyword id="KW-0472">Membrane</keyword>
<keyword id="KW-0732">Signal</keyword>
<keyword id="KW-0812">Transmembrane</keyword>
<keyword id="KW-1133">Transmembrane helix</keyword>
<keyword id="KW-1161">Viral attachment to host cell</keyword>
<keyword id="KW-0261">Viral envelope protein</keyword>
<keyword id="KW-1162">Viral penetration into host cytoplasm</keyword>
<keyword id="KW-0946">Virion</keyword>
<keyword id="KW-1160">Virus entry into host cell</keyword>
<feature type="signal peptide">
    <location>
        <begin position="1" status="less than"/>
        <end position="1"/>
    </location>
</feature>
<feature type="chain" id="PRO_0000039156" description="Hemagglutinin-esterase-fusion glycoprotein chain 1">
    <location>
        <begin position="2"/>
        <end position="432"/>
    </location>
</feature>
<feature type="chain" id="PRO_0000039157" description="Hemagglutinin-esterase-fusion glycoprotein chain 2">
    <location>
        <begin position="433"/>
        <end position="641"/>
    </location>
</feature>
<feature type="topological domain" description="Extracellular" evidence="2">
    <location>
        <begin position="2"/>
        <end position="616"/>
    </location>
</feature>
<feature type="transmembrane region" description="Helical" evidence="2">
    <location>
        <begin position="617"/>
        <end position="637"/>
    </location>
</feature>
<feature type="topological domain" description="Cytoplasmic" evidence="2">
    <location>
        <begin position="638"/>
        <end position="641"/>
    </location>
</feature>
<feature type="region of interest" description="Fusion domain-1" evidence="1">
    <location>
        <begin position="2"/>
        <end position="27"/>
    </location>
</feature>
<feature type="region of interest" description="Esterase domain-1" evidence="1">
    <location>
        <begin position="28"/>
        <end position="138"/>
    </location>
</feature>
<feature type="region of interest" description="N-acetyl-9-O-acetylneuraminic acid binding" evidence="1">
    <location>
        <begin position="138"/>
        <end position="296"/>
    </location>
</feature>
<feature type="region of interest" description="Esterase domain-2" evidence="1">
    <location>
        <begin position="297"/>
        <end position="351"/>
    </location>
</feature>
<feature type="region of interest" description="Fusion domain-2" evidence="1">
    <location>
        <begin position="352"/>
        <end position="637"/>
    </location>
</feature>
<feature type="active site" description="Nucleophile" evidence="1">
    <location>
        <position position="58"/>
    </location>
</feature>
<feature type="active site" description="Charge relay system" evidence="1">
    <location>
        <position position="352"/>
    </location>
</feature>
<feature type="active site" description="Charge relay system" evidence="1">
    <location>
        <position position="355"/>
    </location>
</feature>
<feature type="glycosylation site" description="N-linked (GlcNAc...) asparagine; by host" evidence="2">
    <location>
        <position position="13"/>
    </location>
</feature>
<feature type="glycosylation site" description="N-linked (GlcNAc...) asparagine; by host" evidence="2">
    <location>
        <position position="48"/>
    </location>
</feature>
<feature type="glycosylation site" description="N-linked (GlcNAc...) asparagine; by host" evidence="2">
    <location>
        <position position="131"/>
    </location>
</feature>
<feature type="glycosylation site" description="N-linked (GlcNAc...) asparagine; by host" evidence="2">
    <location>
        <position position="381"/>
    </location>
</feature>
<feature type="disulfide bond" description="Interchain (between HEF1 and HEF2 chains)" evidence="1">
    <location>
        <begin position="7"/>
        <end position="569"/>
    </location>
</feature>
<feature type="disulfide bond" evidence="1">
    <location>
        <begin position="107"/>
        <end position="152"/>
    </location>
</feature>
<feature type="disulfide bond" evidence="1">
    <location>
        <begin position="127"/>
        <end position="175"/>
    </location>
</feature>
<feature type="disulfide bond" evidence="1">
    <location>
        <begin position="196"/>
        <end position="238"/>
    </location>
</feature>
<feature type="disulfide bond" evidence="1">
    <location>
        <begin position="215"/>
        <end position="302"/>
    </location>
</feature>
<feature type="disulfide bond" evidence="1">
    <location>
        <begin position="223"/>
        <end position="275"/>
    </location>
</feature>
<feature type="disulfide bond" evidence="1">
    <location>
        <begin position="332"/>
        <end position="338"/>
    </location>
</feature>
<feature type="non-terminal residue">
    <location>
        <position position="1"/>
    </location>
</feature>
<evidence type="ECO:0000250" key="1"/>
<evidence type="ECO:0000255" key="2"/>
<evidence type="ECO:0000305" key="3"/>
<sequence length="641" mass="70610">AEKIKICLQKQVNSSFSLHNGFGGNLYATEEKRMFELVKPKAGASVLNQSTWIGFGDSRTDKSNPNFPRSADVSVKTANKFRSLTGGSLMLSMFGPPGKVDYLYQGCGKHKVFYEGVNWSPHAAIDCYRKNWTDIKLNFQKNIYELASQSHCMSLVNALDKTIPLQATAGVAGNCNNSFLKNPALYTQEVTPPEKCGKENLAFFTLPTQFGTYECKLHLVASCYFIYDSKEVYNKRGCDNYFQVIYDSSGKVVGGLDNRVSPYTGNTGDTPTMQCDMLQLKPGRYSVRSSPRFLLMPERSYCFDMKEKGLVTAVQSIWGKDRKSDYAVDQACLSTPGCMLIQKQKPYTGEADDHHGDQEMRELLSGLDYEARCISQSGWVNETSPFTEEYLLPPKFGRCPLAAKEESIPKIPDGLLIPTSGTDTTVTKPKSRIFGIDDLIIGLLFVAIVEAGIGGYLLGSRKESGGGVTKESAEKGFEKIGNDIQILRSSTNIAIEKLNDRITHDEQAIRDLTLEIENARSEALLGELGIIRALLVGNISIGLQESLWELASEITNRAGDLAVEISPGCWIIDNNICDQSCQNFIFKFNETAPVPTIPPLDTKIDLQSDPFYWGSSLGLAITTPISLAALVISGIAICRTK</sequence>
<gene>
    <name type="primary">HE</name>
</gene>
<protein>
    <recommendedName>
        <fullName>Hemagglutinin-esterase-fusion glycoprotein</fullName>
        <shortName>HEF</shortName>
        <ecNumber>3.1.1.53</ecNumber>
    </recommendedName>
    <component>
        <recommendedName>
            <fullName>Hemagglutinin-esterase-fusion glycoprotein chain 1</fullName>
            <shortName>HEF1</shortName>
        </recommendedName>
    </component>
    <component>
        <recommendedName>
            <fullName>Hemagglutinin-esterase-fusion glycoprotein chain 2</fullName>
            <shortName>HEF2</shortName>
        </recommendedName>
    </component>
</protein>
<organism>
    <name type="scientific">Influenza C virus (strain C/Mississippi/1980)</name>
    <dbReference type="NCBI Taxonomy" id="203229"/>
    <lineage>
        <taxon>Viruses</taxon>
        <taxon>Riboviria</taxon>
        <taxon>Orthornavirae</taxon>
        <taxon>Negarnaviricota</taxon>
        <taxon>Polyploviricotina</taxon>
        <taxon>Insthoviricetes</taxon>
        <taxon>Articulavirales</taxon>
        <taxon>Orthomyxoviridae</taxon>
        <taxon>Gammainfluenzavirus</taxon>
        <taxon>Gammainfluenzavirus influenzae</taxon>
        <taxon>Influenza C virus</taxon>
    </lineage>
</organism>
<accession>P07970</accession>
<dbReference type="EC" id="3.1.1.53"/>
<dbReference type="EMBL" id="M11640">
    <property type="protein sequence ID" value="AAA43785.1"/>
    <property type="molecule type" value="Genomic_RNA"/>
</dbReference>
<dbReference type="SMR" id="P07970"/>
<dbReference type="GlyCosmos" id="P07970">
    <property type="glycosylation" value="4 sites, No reported glycans"/>
</dbReference>
<dbReference type="GO" id="GO:0020002">
    <property type="term" value="C:host cell plasma membrane"/>
    <property type="evidence" value="ECO:0007669"/>
    <property type="project" value="UniProtKB-SubCell"/>
</dbReference>
<dbReference type="GO" id="GO:0016020">
    <property type="term" value="C:membrane"/>
    <property type="evidence" value="ECO:0007669"/>
    <property type="project" value="UniProtKB-KW"/>
</dbReference>
<dbReference type="GO" id="GO:0019031">
    <property type="term" value="C:viral envelope"/>
    <property type="evidence" value="ECO:0007669"/>
    <property type="project" value="UniProtKB-KW"/>
</dbReference>
<dbReference type="GO" id="GO:0055036">
    <property type="term" value="C:virion membrane"/>
    <property type="evidence" value="ECO:0007669"/>
    <property type="project" value="UniProtKB-SubCell"/>
</dbReference>
<dbReference type="GO" id="GO:0046789">
    <property type="term" value="F:host cell surface receptor binding"/>
    <property type="evidence" value="ECO:0007669"/>
    <property type="project" value="InterPro"/>
</dbReference>
<dbReference type="GO" id="GO:0106331">
    <property type="term" value="F:sialate 4-O-acetylesterase activity"/>
    <property type="evidence" value="ECO:0007669"/>
    <property type="project" value="RHEA"/>
</dbReference>
<dbReference type="GO" id="GO:0106330">
    <property type="term" value="F:sialate 9-O-acetylesterase activity"/>
    <property type="evidence" value="ECO:0007669"/>
    <property type="project" value="RHEA"/>
</dbReference>
<dbReference type="GO" id="GO:0039654">
    <property type="term" value="P:fusion of virus membrane with host endosome membrane"/>
    <property type="evidence" value="ECO:0007669"/>
    <property type="project" value="UniProtKB-KW"/>
</dbReference>
<dbReference type="GO" id="GO:0019064">
    <property type="term" value="P:fusion of virus membrane with host plasma membrane"/>
    <property type="evidence" value="ECO:0007669"/>
    <property type="project" value="InterPro"/>
</dbReference>
<dbReference type="GO" id="GO:0046718">
    <property type="term" value="P:symbiont entry into host cell"/>
    <property type="evidence" value="ECO:0007669"/>
    <property type="project" value="UniProtKB-KW"/>
</dbReference>
<dbReference type="GO" id="GO:0019062">
    <property type="term" value="P:virion attachment to host cell"/>
    <property type="evidence" value="ECO:0007669"/>
    <property type="project" value="UniProtKB-KW"/>
</dbReference>
<dbReference type="Gene3D" id="2.20.70.20">
    <property type="match status" value="2"/>
</dbReference>
<dbReference type="Gene3D" id="3.90.20.10">
    <property type="match status" value="1"/>
</dbReference>
<dbReference type="InterPro" id="IPR008980">
    <property type="entry name" value="Capsid_hemagglutn"/>
</dbReference>
<dbReference type="InterPro" id="IPR007142">
    <property type="entry name" value="Hemagglutn-estrase_core"/>
</dbReference>
<dbReference type="InterPro" id="IPR003860">
    <property type="entry name" value="Hemagglutn-estrase_hemagglutn"/>
</dbReference>
<dbReference type="InterPro" id="IPR014831">
    <property type="entry name" value="Hemagglutn_stalk_influenz-C"/>
</dbReference>
<dbReference type="Pfam" id="PF03996">
    <property type="entry name" value="Hema_esterase"/>
    <property type="match status" value="1"/>
</dbReference>
<dbReference type="Pfam" id="PF02710">
    <property type="entry name" value="Hema_HEFG"/>
    <property type="match status" value="1"/>
</dbReference>
<dbReference type="Pfam" id="PF08720">
    <property type="entry name" value="Hema_stalk"/>
    <property type="match status" value="1"/>
</dbReference>
<dbReference type="SUPFAM" id="SSF58064">
    <property type="entry name" value="Influenza hemagglutinin (stalk)"/>
    <property type="match status" value="1"/>
</dbReference>
<dbReference type="SUPFAM" id="SSF52266">
    <property type="entry name" value="SGNH hydrolase"/>
    <property type="match status" value="1"/>
</dbReference>
<dbReference type="SUPFAM" id="SSF49818">
    <property type="entry name" value="Viral protein domain"/>
    <property type="match status" value="1"/>
</dbReference>
<proteinExistence type="inferred from homology"/>